<name>RL4_HELMI</name>
<organism>
    <name type="scientific">Heliobacterium modesticaldum (strain ATCC 51547 / Ice1)</name>
    <dbReference type="NCBI Taxonomy" id="498761"/>
    <lineage>
        <taxon>Bacteria</taxon>
        <taxon>Bacillati</taxon>
        <taxon>Bacillota</taxon>
        <taxon>Clostridia</taxon>
        <taxon>Eubacteriales</taxon>
        <taxon>Heliobacteriaceae</taxon>
        <taxon>Heliomicrobium</taxon>
    </lineage>
</organism>
<sequence>MPKVALYNTEGAQVGEIELNDAIFGIEPNEAVMHQAVVTQLAAWRRGTHKVKSRGEVSGGGKKPWRQKGTGRARAGTSRSPLWRGGAIIFGPQPRSYKIAMPKKVRRLALKSALSDKVRSGNLIVVDALEMDAPKTKVIAGILNKLKVERKALLVTADIDETVFKSARNIPGVSPVEAVGINVYDILNHDKLVITKNAVAKVEEVFA</sequence>
<dbReference type="EMBL" id="CP000930">
    <property type="protein sequence ID" value="ABZ83956.1"/>
    <property type="molecule type" value="Genomic_DNA"/>
</dbReference>
<dbReference type="RefSeq" id="WP_012282472.1">
    <property type="nucleotide sequence ID" value="NC_010337.2"/>
</dbReference>
<dbReference type="SMR" id="B0TC57"/>
<dbReference type="STRING" id="498761.HM1_1379"/>
<dbReference type="KEGG" id="hmo:HM1_1379"/>
<dbReference type="eggNOG" id="COG0088">
    <property type="taxonomic scope" value="Bacteria"/>
</dbReference>
<dbReference type="HOGENOM" id="CLU_041575_5_2_9"/>
<dbReference type="OrthoDB" id="9803201at2"/>
<dbReference type="Proteomes" id="UP000008550">
    <property type="component" value="Chromosome"/>
</dbReference>
<dbReference type="GO" id="GO:1990904">
    <property type="term" value="C:ribonucleoprotein complex"/>
    <property type="evidence" value="ECO:0007669"/>
    <property type="project" value="UniProtKB-KW"/>
</dbReference>
<dbReference type="GO" id="GO:0005840">
    <property type="term" value="C:ribosome"/>
    <property type="evidence" value="ECO:0007669"/>
    <property type="project" value="UniProtKB-KW"/>
</dbReference>
<dbReference type="GO" id="GO:0019843">
    <property type="term" value="F:rRNA binding"/>
    <property type="evidence" value="ECO:0007669"/>
    <property type="project" value="UniProtKB-UniRule"/>
</dbReference>
<dbReference type="GO" id="GO:0003735">
    <property type="term" value="F:structural constituent of ribosome"/>
    <property type="evidence" value="ECO:0007669"/>
    <property type="project" value="InterPro"/>
</dbReference>
<dbReference type="GO" id="GO:0006412">
    <property type="term" value="P:translation"/>
    <property type="evidence" value="ECO:0007669"/>
    <property type="project" value="UniProtKB-UniRule"/>
</dbReference>
<dbReference type="Gene3D" id="3.40.1370.10">
    <property type="match status" value="1"/>
</dbReference>
<dbReference type="HAMAP" id="MF_01328_B">
    <property type="entry name" value="Ribosomal_uL4_B"/>
    <property type="match status" value="1"/>
</dbReference>
<dbReference type="InterPro" id="IPR002136">
    <property type="entry name" value="Ribosomal_uL4"/>
</dbReference>
<dbReference type="InterPro" id="IPR013005">
    <property type="entry name" value="Ribosomal_uL4-like"/>
</dbReference>
<dbReference type="InterPro" id="IPR023574">
    <property type="entry name" value="Ribosomal_uL4_dom_sf"/>
</dbReference>
<dbReference type="NCBIfam" id="TIGR03953">
    <property type="entry name" value="rplD_bact"/>
    <property type="match status" value="1"/>
</dbReference>
<dbReference type="PANTHER" id="PTHR10746">
    <property type="entry name" value="50S RIBOSOMAL PROTEIN L4"/>
    <property type="match status" value="1"/>
</dbReference>
<dbReference type="PANTHER" id="PTHR10746:SF6">
    <property type="entry name" value="LARGE RIBOSOMAL SUBUNIT PROTEIN UL4M"/>
    <property type="match status" value="1"/>
</dbReference>
<dbReference type="Pfam" id="PF00573">
    <property type="entry name" value="Ribosomal_L4"/>
    <property type="match status" value="1"/>
</dbReference>
<dbReference type="SUPFAM" id="SSF52166">
    <property type="entry name" value="Ribosomal protein L4"/>
    <property type="match status" value="1"/>
</dbReference>
<keyword id="KW-1185">Reference proteome</keyword>
<keyword id="KW-0687">Ribonucleoprotein</keyword>
<keyword id="KW-0689">Ribosomal protein</keyword>
<keyword id="KW-0694">RNA-binding</keyword>
<keyword id="KW-0699">rRNA-binding</keyword>
<proteinExistence type="inferred from homology"/>
<feature type="chain" id="PRO_1000142133" description="Large ribosomal subunit protein uL4">
    <location>
        <begin position="1"/>
        <end position="207"/>
    </location>
</feature>
<feature type="region of interest" description="Disordered" evidence="2">
    <location>
        <begin position="49"/>
        <end position="79"/>
    </location>
</feature>
<reference key="1">
    <citation type="journal article" date="2008" name="J. Bacteriol.">
        <title>The genome of Heliobacterium modesticaldum, a phototrophic representative of the Firmicutes containing the simplest photosynthetic apparatus.</title>
        <authorList>
            <person name="Sattley W.M."/>
            <person name="Madigan M.T."/>
            <person name="Swingley W.D."/>
            <person name="Cheung P.C."/>
            <person name="Clocksin K.M."/>
            <person name="Conrad A.L."/>
            <person name="Dejesa L.C."/>
            <person name="Honchak B.M."/>
            <person name="Jung D.O."/>
            <person name="Karbach L.E."/>
            <person name="Kurdoglu A."/>
            <person name="Lahiri S."/>
            <person name="Mastrian S.D."/>
            <person name="Page L.E."/>
            <person name="Taylor H.L."/>
            <person name="Wang Z.T."/>
            <person name="Raymond J."/>
            <person name="Chen M."/>
            <person name="Blankenship R.E."/>
            <person name="Touchman J.W."/>
        </authorList>
    </citation>
    <scope>NUCLEOTIDE SEQUENCE [LARGE SCALE GENOMIC DNA]</scope>
    <source>
        <strain>ATCC 51547 / Ice1</strain>
    </source>
</reference>
<comment type="function">
    <text evidence="1">One of the primary rRNA binding proteins, this protein initially binds near the 5'-end of the 23S rRNA. It is important during the early stages of 50S assembly. It makes multiple contacts with different domains of the 23S rRNA in the assembled 50S subunit and ribosome.</text>
</comment>
<comment type="function">
    <text evidence="1">Forms part of the polypeptide exit tunnel.</text>
</comment>
<comment type="subunit">
    <text evidence="1">Part of the 50S ribosomal subunit.</text>
</comment>
<comment type="similarity">
    <text evidence="1">Belongs to the universal ribosomal protein uL4 family.</text>
</comment>
<accession>B0TC57</accession>
<evidence type="ECO:0000255" key="1">
    <source>
        <dbReference type="HAMAP-Rule" id="MF_01328"/>
    </source>
</evidence>
<evidence type="ECO:0000256" key="2">
    <source>
        <dbReference type="SAM" id="MobiDB-lite"/>
    </source>
</evidence>
<evidence type="ECO:0000305" key="3"/>
<protein>
    <recommendedName>
        <fullName evidence="1">Large ribosomal subunit protein uL4</fullName>
    </recommendedName>
    <alternativeName>
        <fullName evidence="3">50S ribosomal protein L4</fullName>
    </alternativeName>
</protein>
<gene>
    <name evidence="1" type="primary">rplD</name>
    <name type="ordered locus">Helmi_13310</name>
    <name type="ORF">HM1_1379</name>
</gene>